<reference key="1">
    <citation type="journal article" date="2000" name="Genomics">
        <title>Cloning and chromosomal localization of a human class III myosin.</title>
        <authorList>
            <person name="Dose A.C."/>
            <person name="Burnside B."/>
        </authorList>
    </citation>
    <scope>NUCLEOTIDE SEQUENCE [MRNA] (ISOFORM 1)</scope>
    <scope>VARIANT SER-1313</scope>
</reference>
<reference key="2">
    <citation type="journal article" date="2002" name="Proc. Natl. Acad. Sci. U.S.A.">
        <title>From flies' eyes to our ears: mutations in a human class III myosin cause progressive nonsyndromic hearing loss DFNB30.</title>
        <authorList>
            <person name="Walsh T."/>
            <person name="Walsh V."/>
            <person name="Vreugde S."/>
            <person name="Hertzano R."/>
            <person name="Shahin H."/>
            <person name="Haika S."/>
            <person name="Lee M.K."/>
            <person name="Kanaan M."/>
            <person name="King M.-C."/>
            <person name="Avraham K.B."/>
        </authorList>
    </citation>
    <scope>NUCLEOTIDE SEQUENCE [MRNA] (ISOFORM 1)</scope>
    <scope>VARIANT SER-1313</scope>
    <scope>INVOLVEMENT IN DFNB30</scope>
    <scope>FUNCTION</scope>
</reference>
<reference key="3">
    <citation type="journal article" date="2004" name="Nature">
        <title>The DNA sequence and comparative analysis of human chromosome 10.</title>
        <authorList>
            <person name="Deloukas P."/>
            <person name="Earthrowl M.E."/>
            <person name="Grafham D.V."/>
            <person name="Rubenfield M."/>
            <person name="French L."/>
            <person name="Steward C.A."/>
            <person name="Sims S.K."/>
            <person name="Jones M.C."/>
            <person name="Searle S."/>
            <person name="Scott C."/>
            <person name="Howe K."/>
            <person name="Hunt S.E."/>
            <person name="Andrews T.D."/>
            <person name="Gilbert J.G.R."/>
            <person name="Swarbreck D."/>
            <person name="Ashurst J.L."/>
            <person name="Taylor A."/>
            <person name="Battles J."/>
            <person name="Bird C.P."/>
            <person name="Ainscough R."/>
            <person name="Almeida J.P."/>
            <person name="Ashwell R.I.S."/>
            <person name="Ambrose K.D."/>
            <person name="Babbage A.K."/>
            <person name="Bagguley C.L."/>
            <person name="Bailey J."/>
            <person name="Banerjee R."/>
            <person name="Bates K."/>
            <person name="Beasley H."/>
            <person name="Bray-Allen S."/>
            <person name="Brown A.J."/>
            <person name="Brown J.Y."/>
            <person name="Burford D.C."/>
            <person name="Burrill W."/>
            <person name="Burton J."/>
            <person name="Cahill P."/>
            <person name="Camire D."/>
            <person name="Carter N.P."/>
            <person name="Chapman J.C."/>
            <person name="Clark S.Y."/>
            <person name="Clarke G."/>
            <person name="Clee C.M."/>
            <person name="Clegg S."/>
            <person name="Corby N."/>
            <person name="Coulson A."/>
            <person name="Dhami P."/>
            <person name="Dutta I."/>
            <person name="Dunn M."/>
            <person name="Faulkner L."/>
            <person name="Frankish A."/>
            <person name="Frankland J.A."/>
            <person name="Garner P."/>
            <person name="Garnett J."/>
            <person name="Gribble S."/>
            <person name="Griffiths C."/>
            <person name="Grocock R."/>
            <person name="Gustafson E."/>
            <person name="Hammond S."/>
            <person name="Harley J.L."/>
            <person name="Hart E."/>
            <person name="Heath P.D."/>
            <person name="Ho T.P."/>
            <person name="Hopkins B."/>
            <person name="Horne J."/>
            <person name="Howden P.J."/>
            <person name="Huckle E."/>
            <person name="Hynds C."/>
            <person name="Johnson C."/>
            <person name="Johnson D."/>
            <person name="Kana A."/>
            <person name="Kay M."/>
            <person name="Kimberley A.M."/>
            <person name="Kershaw J.K."/>
            <person name="Kokkinaki M."/>
            <person name="Laird G.K."/>
            <person name="Lawlor S."/>
            <person name="Lee H.M."/>
            <person name="Leongamornlert D.A."/>
            <person name="Laird G."/>
            <person name="Lloyd C."/>
            <person name="Lloyd D.M."/>
            <person name="Loveland J."/>
            <person name="Lovell J."/>
            <person name="McLaren S."/>
            <person name="McLay K.E."/>
            <person name="McMurray A."/>
            <person name="Mashreghi-Mohammadi M."/>
            <person name="Matthews L."/>
            <person name="Milne S."/>
            <person name="Nickerson T."/>
            <person name="Nguyen M."/>
            <person name="Overton-Larty E."/>
            <person name="Palmer S.A."/>
            <person name="Pearce A.V."/>
            <person name="Peck A.I."/>
            <person name="Pelan S."/>
            <person name="Phillimore B."/>
            <person name="Porter K."/>
            <person name="Rice C.M."/>
            <person name="Rogosin A."/>
            <person name="Ross M.T."/>
            <person name="Sarafidou T."/>
            <person name="Sehra H.K."/>
            <person name="Shownkeen R."/>
            <person name="Skuce C.D."/>
            <person name="Smith M."/>
            <person name="Standring L."/>
            <person name="Sycamore N."/>
            <person name="Tester J."/>
            <person name="Thorpe A."/>
            <person name="Torcasso W."/>
            <person name="Tracey A."/>
            <person name="Tromans A."/>
            <person name="Tsolas J."/>
            <person name="Wall M."/>
            <person name="Walsh J."/>
            <person name="Wang H."/>
            <person name="Weinstock K."/>
            <person name="West A.P."/>
            <person name="Willey D.L."/>
            <person name="Whitehead S.L."/>
            <person name="Wilming L."/>
            <person name="Wray P.W."/>
            <person name="Young L."/>
            <person name="Chen Y."/>
            <person name="Lovering R.C."/>
            <person name="Moschonas N.K."/>
            <person name="Siebert R."/>
            <person name="Fechtel K."/>
            <person name="Bentley D."/>
            <person name="Durbin R.M."/>
            <person name="Hubbard T."/>
            <person name="Doucette-Stamm L."/>
            <person name="Beck S."/>
            <person name="Smith D.R."/>
            <person name="Rogers J."/>
        </authorList>
    </citation>
    <scope>NUCLEOTIDE SEQUENCE [LARGE SCALE GENOMIC DNA]</scope>
</reference>
<reference key="4">
    <citation type="journal article" date="2004" name="Genome Res.">
        <title>The status, quality, and expansion of the NIH full-length cDNA project: the Mammalian Gene Collection (MGC).</title>
        <authorList>
            <consortium name="The MGC Project Team"/>
        </authorList>
    </citation>
    <scope>NUCLEOTIDE SEQUENCE [LARGE SCALE MRNA] (ISOFORM 2)</scope>
    <source>
        <tissue>Brain</tissue>
    </source>
</reference>
<reference key="5">
    <citation type="journal article" date="2015" name="PLoS ONE">
        <title>Invertebrate and vertebrate class III myosins interact with MORN repeat-containing adaptor proteins.</title>
        <authorList>
            <person name="Mecklenburg K.L."/>
            <person name="Freed S.A."/>
            <person name="Raval M."/>
            <person name="Quintero O.A."/>
            <person name="Yengo C.M."/>
            <person name="O'Tousa J.E."/>
        </authorList>
    </citation>
    <scope>INTERACTION WITH MORN4</scope>
    <scope>SUBCELLULAR LOCATION</scope>
</reference>
<reference key="6">
    <citation type="journal article" date="2007" name="Nature">
        <title>Patterns of somatic mutation in human cancer genomes.</title>
        <authorList>
            <person name="Greenman C."/>
            <person name="Stephens P."/>
            <person name="Smith R."/>
            <person name="Dalgliesh G.L."/>
            <person name="Hunter C."/>
            <person name="Bignell G."/>
            <person name="Davies H."/>
            <person name="Teague J."/>
            <person name="Butler A."/>
            <person name="Stevens C."/>
            <person name="Edkins S."/>
            <person name="O'Meara S."/>
            <person name="Vastrik I."/>
            <person name="Schmidt E.E."/>
            <person name="Avis T."/>
            <person name="Barthorpe S."/>
            <person name="Bhamra G."/>
            <person name="Buck G."/>
            <person name="Choudhury B."/>
            <person name="Clements J."/>
            <person name="Cole J."/>
            <person name="Dicks E."/>
            <person name="Forbes S."/>
            <person name="Gray K."/>
            <person name="Halliday K."/>
            <person name="Harrison R."/>
            <person name="Hills K."/>
            <person name="Hinton J."/>
            <person name="Jenkinson A."/>
            <person name="Jones D."/>
            <person name="Menzies A."/>
            <person name="Mironenko T."/>
            <person name="Perry J."/>
            <person name="Raine K."/>
            <person name="Richardson D."/>
            <person name="Shepherd R."/>
            <person name="Small A."/>
            <person name="Tofts C."/>
            <person name="Varian J."/>
            <person name="Webb T."/>
            <person name="West S."/>
            <person name="Widaa S."/>
            <person name="Yates A."/>
            <person name="Cahill D.P."/>
            <person name="Louis D.N."/>
            <person name="Goldstraw P."/>
            <person name="Nicholson A.G."/>
            <person name="Brasseur F."/>
            <person name="Looijenga L."/>
            <person name="Weber B.L."/>
            <person name="Chiew Y.-E."/>
            <person name="DeFazio A."/>
            <person name="Greaves M.F."/>
            <person name="Green A.R."/>
            <person name="Campbell P."/>
            <person name="Birney E."/>
            <person name="Easton D.F."/>
            <person name="Chenevix-Trench G."/>
            <person name="Tan M.-H."/>
            <person name="Khoo S.K."/>
            <person name="Teh B.T."/>
            <person name="Yuen S.T."/>
            <person name="Leung S.Y."/>
            <person name="Wooster R."/>
            <person name="Futreal P.A."/>
            <person name="Stratton M.R."/>
        </authorList>
    </citation>
    <scope>VARIANTS [LARGE SCALE ANALYSIS] ILE-178; HIS-319; VAL-348; ILE-369; LYS-525; SER-833; ASN-956; ARG-956; THR-1032; MET-1045; MET-1137; ALA-1195; SER-1284; THR-1287; SER-1313; HIS-1347; ILE-1417 AND GLU-1488</scope>
</reference>
<reference key="7">
    <citation type="journal article" date="2018" name="Sci. Rep.">
        <title>Characterization of a novel MYO3A missense mutation associated with a dominant form of late onset hearing loss.</title>
        <authorList>
            <person name="Dantas V.G.L."/>
            <person name="Raval M.H."/>
            <person name="Ballesteros A."/>
            <person name="Cui R."/>
            <person name="Gunther L.K."/>
            <person name="Yamamoto G.L."/>
            <person name="Alves L.U."/>
            <person name="Bueno A.S."/>
            <person name="Lezirovitz K."/>
            <person name="Pirana S."/>
            <person name="Mendes B.C.A."/>
            <person name="Yengo C.M."/>
            <person name="Kachar B."/>
            <person name="Mingroni-Netto R.C."/>
        </authorList>
    </citation>
    <scope>VARIANT DFNA90 TRP-697</scope>
    <scope>CHARACTERIZATION OF VARIANT DFNA90 TRP-697</scope>
    <scope>INVOLVEMENT IN DFNA90</scope>
    <scope>FUNCTION</scope>
    <scope>SUBCELLULAR LOCATION</scope>
</reference>
<reference key="8">
    <citation type="journal article" date="2020" name="Mol. Genet. Genomic Med.">
        <title>A novel missense variant in MYO3A is associated with autosomal dominant high-frequency hearing loss in a German family.</title>
        <authorList>
            <person name="Doll J."/>
            <person name="Hofrichter M.A.H."/>
            <person name="Bahena P."/>
            <person name="Heihoff A."/>
            <person name="Segebarth D."/>
            <person name="Mueller T."/>
            <person name="Dittrich M."/>
            <person name="Haaf T."/>
            <person name="Vona B."/>
        </authorList>
    </citation>
    <scope>VARIANT DFNA90 PRO-239</scope>
    <scope>INVOLVEMENT IN DFNA90</scope>
</reference>
<reference key="9">
    <citation type="journal article" date="2022" name="Mol. Biol. Cell">
        <title>Deafness mutation in the MYO3A motor domain impairs actin protrusion elongation mechanism.</title>
        <authorList>
            <person name="Gunther L.K."/>
            <person name="Cirilo J.A. Jr."/>
            <person name="Desetty R."/>
            <person name="Yengo C.M."/>
        </authorList>
    </citation>
    <scope>CHARACTERIZATION OF VARIANT DFNA90 TRP-697</scope>
    <scope>FUNCTION</scope>
    <scope>CATALYTIC ACTIVITY</scope>
</reference>
<organism>
    <name type="scientific">Homo sapiens</name>
    <name type="common">Human</name>
    <dbReference type="NCBI Taxonomy" id="9606"/>
    <lineage>
        <taxon>Eukaryota</taxon>
        <taxon>Metazoa</taxon>
        <taxon>Chordata</taxon>
        <taxon>Craniata</taxon>
        <taxon>Vertebrata</taxon>
        <taxon>Euteleostomi</taxon>
        <taxon>Mammalia</taxon>
        <taxon>Eutheria</taxon>
        <taxon>Euarchontoglires</taxon>
        <taxon>Primates</taxon>
        <taxon>Haplorrhini</taxon>
        <taxon>Catarrhini</taxon>
        <taxon>Hominidae</taxon>
        <taxon>Homo</taxon>
    </lineage>
</organism>
<accession>Q8NEV4</accession>
<accession>Q4G0X2</accession>
<accession>Q5VZ28</accession>
<accession>Q8WX17</accession>
<accession>Q9NYS8</accession>
<gene>
    <name type="primary">MYO3A</name>
</gene>
<dbReference type="EC" id="2.7.11.1"/>
<dbReference type="EMBL" id="AF229172">
    <property type="protein sequence ID" value="AAF70861.1"/>
    <property type="molecule type" value="mRNA"/>
</dbReference>
<dbReference type="EMBL" id="AY101367">
    <property type="protein sequence ID" value="AAM34500.1"/>
    <property type="molecule type" value="mRNA"/>
</dbReference>
<dbReference type="EMBL" id="AL162503">
    <property type="status" value="NOT_ANNOTATED_CDS"/>
    <property type="molecule type" value="Genomic_DNA"/>
</dbReference>
<dbReference type="EMBL" id="AL358612">
    <property type="status" value="NOT_ANNOTATED_CDS"/>
    <property type="molecule type" value="Genomic_DNA"/>
</dbReference>
<dbReference type="EMBL" id="AL360217">
    <property type="status" value="NOT_ANNOTATED_CDS"/>
    <property type="molecule type" value="Genomic_DNA"/>
</dbReference>
<dbReference type="EMBL" id="AL391812">
    <property type="status" value="NOT_ANNOTATED_CDS"/>
    <property type="molecule type" value="Genomic_DNA"/>
</dbReference>
<dbReference type="EMBL" id="BC036079">
    <property type="protein sequence ID" value="AAH36079.1"/>
    <property type="molecule type" value="mRNA"/>
</dbReference>
<dbReference type="CCDS" id="CCDS7148.1">
    <molecule id="Q8NEV4-1"/>
</dbReference>
<dbReference type="CCDS" id="CCDS91223.1">
    <molecule id="Q8NEV4-2"/>
</dbReference>
<dbReference type="RefSeq" id="NP_001355194.1">
    <molecule id="Q8NEV4-2"/>
    <property type="nucleotide sequence ID" value="NM_001368265.1"/>
</dbReference>
<dbReference type="RefSeq" id="NP_059129.3">
    <molecule id="Q8NEV4-1"/>
    <property type="nucleotide sequence ID" value="NM_017433.4"/>
</dbReference>
<dbReference type="RefSeq" id="XP_011517800.1">
    <molecule id="Q8NEV4-1"/>
    <property type="nucleotide sequence ID" value="XM_011519498.3"/>
</dbReference>
<dbReference type="RefSeq" id="XP_011517801.1">
    <molecule id="Q8NEV4-1"/>
    <property type="nucleotide sequence ID" value="XM_011519499.2"/>
</dbReference>
<dbReference type="RefSeq" id="XP_011517802.1">
    <molecule id="Q8NEV4-1"/>
    <property type="nucleotide sequence ID" value="XM_011519500.3"/>
</dbReference>
<dbReference type="PDB" id="6JLE">
    <property type="method" value="X-ray"/>
    <property type="resolution" value="1.55 A"/>
    <property type="chains" value="E=1410-1457"/>
</dbReference>
<dbReference type="PDBsum" id="6JLE"/>
<dbReference type="SMR" id="Q8NEV4"/>
<dbReference type="BioGRID" id="119814">
    <property type="interactions" value="11"/>
</dbReference>
<dbReference type="FunCoup" id="Q8NEV4">
    <property type="interactions" value="385"/>
</dbReference>
<dbReference type="IntAct" id="Q8NEV4">
    <property type="interactions" value="8"/>
</dbReference>
<dbReference type="STRING" id="9606.ENSP00000495965"/>
<dbReference type="BindingDB" id="Q8NEV4"/>
<dbReference type="ChEMBL" id="CHEMBL5546"/>
<dbReference type="DrugBank" id="DB12010">
    <property type="generic name" value="Fostamatinib"/>
</dbReference>
<dbReference type="DrugCentral" id="Q8NEV4"/>
<dbReference type="iPTMnet" id="Q8NEV4"/>
<dbReference type="PhosphoSitePlus" id="Q8NEV4"/>
<dbReference type="BioMuta" id="MYO3A"/>
<dbReference type="DMDM" id="160112826"/>
<dbReference type="jPOST" id="Q8NEV4"/>
<dbReference type="MassIVE" id="Q8NEV4"/>
<dbReference type="PaxDb" id="9606-ENSP00000265944"/>
<dbReference type="PeptideAtlas" id="Q8NEV4"/>
<dbReference type="ProteomicsDB" id="73220">
    <molecule id="Q8NEV4-1"/>
</dbReference>
<dbReference type="Antibodypedia" id="25882">
    <property type="antibodies" value="148 antibodies from 17 providers"/>
</dbReference>
<dbReference type="DNASU" id="53904"/>
<dbReference type="Ensembl" id="ENST00000376302.5">
    <molecule id="Q8NEV4-2"/>
    <property type="protein sequence ID" value="ENSP00000365479.1"/>
    <property type="gene ID" value="ENSG00000095777.17"/>
</dbReference>
<dbReference type="Ensembl" id="ENST00000642920.2">
    <molecule id="Q8NEV4-1"/>
    <property type="protein sequence ID" value="ENSP00000495965.1"/>
    <property type="gene ID" value="ENSG00000095777.17"/>
</dbReference>
<dbReference type="GeneID" id="53904"/>
<dbReference type="KEGG" id="hsa:53904"/>
<dbReference type="MANE-Select" id="ENST00000642920.2">
    <property type="protein sequence ID" value="ENSP00000495965.1"/>
    <property type="RefSeq nucleotide sequence ID" value="NM_017433.5"/>
    <property type="RefSeq protein sequence ID" value="NP_059129.3"/>
</dbReference>
<dbReference type="UCSC" id="uc001ism.3">
    <molecule id="Q8NEV4-1"/>
    <property type="organism name" value="human"/>
</dbReference>
<dbReference type="AGR" id="HGNC:7601"/>
<dbReference type="CTD" id="53904"/>
<dbReference type="DisGeNET" id="53904"/>
<dbReference type="GeneCards" id="MYO3A"/>
<dbReference type="GeneReviews" id="MYO3A"/>
<dbReference type="HGNC" id="HGNC:7601">
    <property type="gene designation" value="MYO3A"/>
</dbReference>
<dbReference type="HPA" id="ENSG00000095777">
    <property type="expression patterns" value="Group enriched (retina, testis)"/>
</dbReference>
<dbReference type="MalaCards" id="MYO3A"/>
<dbReference type="MIM" id="606808">
    <property type="type" value="gene"/>
</dbReference>
<dbReference type="MIM" id="607101">
    <property type="type" value="phenotype"/>
</dbReference>
<dbReference type="MIM" id="620722">
    <property type="type" value="phenotype"/>
</dbReference>
<dbReference type="neXtProt" id="NX_Q8NEV4"/>
<dbReference type="OpenTargets" id="ENSG00000095777"/>
<dbReference type="Orphanet" id="90636">
    <property type="disease" value="Rare autosomal recessive non-syndromic sensorineural deafness type DFNB"/>
</dbReference>
<dbReference type="PharmGKB" id="PA31405"/>
<dbReference type="VEuPathDB" id="HostDB:ENSG00000095777"/>
<dbReference type="eggNOG" id="KOG0587">
    <property type="taxonomic scope" value="Eukaryota"/>
</dbReference>
<dbReference type="eggNOG" id="KOG4229">
    <property type="taxonomic scope" value="Eukaryota"/>
</dbReference>
<dbReference type="GeneTree" id="ENSGT00940000155939"/>
<dbReference type="HOGENOM" id="CLU_000192_10_1_1"/>
<dbReference type="InParanoid" id="Q8NEV4"/>
<dbReference type="OMA" id="VIKESHY"/>
<dbReference type="OrthoDB" id="6108017at2759"/>
<dbReference type="PAN-GO" id="Q8NEV4">
    <property type="GO annotations" value="9 GO annotations based on evolutionary models"/>
</dbReference>
<dbReference type="PhylomeDB" id="Q8NEV4"/>
<dbReference type="TreeFam" id="TF326512"/>
<dbReference type="PathwayCommons" id="Q8NEV4"/>
<dbReference type="Reactome" id="R-HSA-9662360">
    <property type="pathway name" value="Sensory processing of sound by inner hair cells of the cochlea"/>
</dbReference>
<dbReference type="Reactome" id="R-HSA-9662361">
    <property type="pathway name" value="Sensory processing of sound by outer hair cells of the cochlea"/>
</dbReference>
<dbReference type="SignaLink" id="Q8NEV4"/>
<dbReference type="SIGNOR" id="Q8NEV4"/>
<dbReference type="BioGRID-ORCS" id="53904">
    <property type="hits" value="9 hits in 1182 CRISPR screens"/>
</dbReference>
<dbReference type="GeneWiki" id="MYO3A"/>
<dbReference type="GenomeRNAi" id="53904"/>
<dbReference type="Pharos" id="Q8NEV4">
    <property type="development level" value="Tbio"/>
</dbReference>
<dbReference type="PRO" id="PR:Q8NEV4"/>
<dbReference type="Proteomes" id="UP000005640">
    <property type="component" value="Chromosome 10"/>
</dbReference>
<dbReference type="RNAct" id="Q8NEV4">
    <property type="molecule type" value="protein"/>
</dbReference>
<dbReference type="Bgee" id="ENSG00000095777">
    <property type="expression patterns" value="Expressed in islet of Langerhans and 106 other cell types or tissues"/>
</dbReference>
<dbReference type="ExpressionAtlas" id="Q8NEV4">
    <property type="expression patterns" value="baseline and differential"/>
</dbReference>
<dbReference type="GO" id="GO:0005737">
    <property type="term" value="C:cytoplasm"/>
    <property type="evidence" value="ECO:0000314"/>
    <property type="project" value="UniProtKB"/>
</dbReference>
<dbReference type="GO" id="GO:0031941">
    <property type="term" value="C:filamentous actin"/>
    <property type="evidence" value="ECO:0000314"/>
    <property type="project" value="UniProtKB"/>
</dbReference>
<dbReference type="GO" id="GO:0030175">
    <property type="term" value="C:filopodium"/>
    <property type="evidence" value="ECO:0000314"/>
    <property type="project" value="UniProtKB"/>
</dbReference>
<dbReference type="GO" id="GO:0032433">
    <property type="term" value="C:filopodium tip"/>
    <property type="evidence" value="ECO:0000314"/>
    <property type="project" value="UniProtKB"/>
</dbReference>
<dbReference type="GO" id="GO:0016459">
    <property type="term" value="C:myosin complex"/>
    <property type="evidence" value="ECO:0007669"/>
    <property type="project" value="UniProtKB-KW"/>
</dbReference>
<dbReference type="GO" id="GO:0001917">
    <property type="term" value="C:photoreceptor inner segment"/>
    <property type="evidence" value="ECO:0000318"/>
    <property type="project" value="GO_Central"/>
</dbReference>
<dbReference type="GO" id="GO:0032426">
    <property type="term" value="C:stereocilium tip"/>
    <property type="evidence" value="ECO:0000250"/>
    <property type="project" value="UniProtKB"/>
</dbReference>
<dbReference type="GO" id="GO:0003779">
    <property type="term" value="F:actin binding"/>
    <property type="evidence" value="ECO:0007669"/>
    <property type="project" value="UniProtKB-KW"/>
</dbReference>
<dbReference type="GO" id="GO:0043531">
    <property type="term" value="F:ADP binding"/>
    <property type="evidence" value="ECO:0000314"/>
    <property type="project" value="UniProtKB"/>
</dbReference>
<dbReference type="GO" id="GO:0005524">
    <property type="term" value="F:ATP binding"/>
    <property type="evidence" value="ECO:0007669"/>
    <property type="project" value="UniProtKB-KW"/>
</dbReference>
<dbReference type="GO" id="GO:0016887">
    <property type="term" value="F:ATP hydrolysis activity"/>
    <property type="evidence" value="ECO:0007669"/>
    <property type="project" value="RHEA"/>
</dbReference>
<dbReference type="GO" id="GO:0005516">
    <property type="term" value="F:calmodulin binding"/>
    <property type="evidence" value="ECO:0000314"/>
    <property type="project" value="UniProtKB"/>
</dbReference>
<dbReference type="GO" id="GO:0000146">
    <property type="term" value="F:microfilament motor activity"/>
    <property type="evidence" value="ECO:0000314"/>
    <property type="project" value="UniProtKB"/>
</dbReference>
<dbReference type="GO" id="GO:0060002">
    <property type="term" value="F:plus-end directed microfilament motor activity"/>
    <property type="evidence" value="ECO:0000314"/>
    <property type="project" value="UniProtKB"/>
</dbReference>
<dbReference type="GO" id="GO:0004672">
    <property type="term" value="F:protein kinase activity"/>
    <property type="evidence" value="ECO:0000314"/>
    <property type="project" value="UniProtKB"/>
</dbReference>
<dbReference type="GO" id="GO:0106310">
    <property type="term" value="F:protein serine kinase activity"/>
    <property type="evidence" value="ECO:0007669"/>
    <property type="project" value="RHEA"/>
</dbReference>
<dbReference type="GO" id="GO:0004674">
    <property type="term" value="F:protein serine/threonine kinase activity"/>
    <property type="evidence" value="ECO:0000318"/>
    <property type="project" value="GO_Central"/>
</dbReference>
<dbReference type="GO" id="GO:0090103">
    <property type="term" value="P:cochlea morphogenesis"/>
    <property type="evidence" value="ECO:0000250"/>
    <property type="project" value="UniProtKB"/>
</dbReference>
<dbReference type="GO" id="GO:0051491">
    <property type="term" value="P:positive regulation of filopodium assembly"/>
    <property type="evidence" value="ECO:0000318"/>
    <property type="project" value="GO_Central"/>
</dbReference>
<dbReference type="GO" id="GO:0046777">
    <property type="term" value="P:protein autophosphorylation"/>
    <property type="evidence" value="ECO:0000314"/>
    <property type="project" value="UniProtKB"/>
</dbReference>
<dbReference type="GO" id="GO:0030832">
    <property type="term" value="P:regulation of actin filament length"/>
    <property type="evidence" value="ECO:0000318"/>
    <property type="project" value="GO_Central"/>
</dbReference>
<dbReference type="GO" id="GO:0007605">
    <property type="term" value="P:sensory perception of sound"/>
    <property type="evidence" value="ECO:0000315"/>
    <property type="project" value="UniProtKB"/>
</dbReference>
<dbReference type="GO" id="GO:0007601">
    <property type="term" value="P:visual perception"/>
    <property type="evidence" value="ECO:0007669"/>
    <property type="project" value="UniProtKB-KW"/>
</dbReference>
<dbReference type="CDD" id="cd23767">
    <property type="entry name" value="IQCD"/>
    <property type="match status" value="1"/>
</dbReference>
<dbReference type="CDD" id="cd21956">
    <property type="entry name" value="MBD_Myo3a"/>
    <property type="match status" value="1"/>
</dbReference>
<dbReference type="CDD" id="cd01379">
    <property type="entry name" value="MYSc_Myo3"/>
    <property type="match status" value="1"/>
</dbReference>
<dbReference type="CDD" id="cd06638">
    <property type="entry name" value="STKc_myosinIIIA_N"/>
    <property type="match status" value="1"/>
</dbReference>
<dbReference type="FunFam" id="1.10.10.820:FF:000006">
    <property type="entry name" value="Myosin IIIA"/>
    <property type="match status" value="1"/>
</dbReference>
<dbReference type="FunFam" id="1.10.510.10:FF:000247">
    <property type="entry name" value="Myosin IIIA"/>
    <property type="match status" value="1"/>
</dbReference>
<dbReference type="FunFam" id="1.20.58.530:FF:000010">
    <property type="entry name" value="Myosin IIIA"/>
    <property type="match status" value="1"/>
</dbReference>
<dbReference type="FunFam" id="3.30.200.20:FF:000456">
    <property type="entry name" value="Myosin IIIA"/>
    <property type="match status" value="1"/>
</dbReference>
<dbReference type="Gene3D" id="1.10.10.820">
    <property type="match status" value="1"/>
</dbReference>
<dbReference type="Gene3D" id="1.20.5.190">
    <property type="match status" value="1"/>
</dbReference>
<dbReference type="Gene3D" id="1.20.58.530">
    <property type="match status" value="1"/>
</dbReference>
<dbReference type="Gene3D" id="6.20.240.20">
    <property type="match status" value="1"/>
</dbReference>
<dbReference type="Gene3D" id="3.40.850.10">
    <property type="entry name" value="Kinesin motor domain"/>
    <property type="match status" value="1"/>
</dbReference>
<dbReference type="Gene3D" id="1.20.120.720">
    <property type="entry name" value="Myosin VI head, motor domain, U50 subdomain"/>
    <property type="match status" value="1"/>
</dbReference>
<dbReference type="Gene3D" id="1.10.510.10">
    <property type="entry name" value="Transferase(Phosphotransferase) domain 1"/>
    <property type="match status" value="1"/>
</dbReference>
<dbReference type="InterPro" id="IPR000048">
    <property type="entry name" value="IQ_motif_EF-hand-BS"/>
</dbReference>
<dbReference type="InterPro" id="IPR011009">
    <property type="entry name" value="Kinase-like_dom_sf"/>
</dbReference>
<dbReference type="InterPro" id="IPR036961">
    <property type="entry name" value="Kinesin_motor_dom_sf"/>
</dbReference>
<dbReference type="InterPro" id="IPR052409">
    <property type="entry name" value="Myosin-III_kinase_activity"/>
</dbReference>
<dbReference type="InterPro" id="IPR001609">
    <property type="entry name" value="Myosin_head_motor_dom-like"/>
</dbReference>
<dbReference type="InterPro" id="IPR036083">
    <property type="entry name" value="MYSc_Myo3"/>
</dbReference>
<dbReference type="InterPro" id="IPR027417">
    <property type="entry name" value="P-loop_NTPase"/>
</dbReference>
<dbReference type="InterPro" id="IPR000719">
    <property type="entry name" value="Prot_kinase_dom"/>
</dbReference>
<dbReference type="InterPro" id="IPR017441">
    <property type="entry name" value="Protein_kinase_ATP_BS"/>
</dbReference>
<dbReference type="PANTHER" id="PTHR46256">
    <property type="entry name" value="AGAP011099-PA"/>
    <property type="match status" value="1"/>
</dbReference>
<dbReference type="PANTHER" id="PTHR46256:SF4">
    <property type="entry name" value="MYOSIN-IIIA"/>
    <property type="match status" value="1"/>
</dbReference>
<dbReference type="Pfam" id="PF00612">
    <property type="entry name" value="IQ"/>
    <property type="match status" value="2"/>
</dbReference>
<dbReference type="Pfam" id="PF00063">
    <property type="entry name" value="Myosin_head"/>
    <property type="match status" value="1"/>
</dbReference>
<dbReference type="Pfam" id="PF00069">
    <property type="entry name" value="Pkinase"/>
    <property type="match status" value="1"/>
</dbReference>
<dbReference type="PRINTS" id="PR00193">
    <property type="entry name" value="MYOSINHEAVY"/>
</dbReference>
<dbReference type="SMART" id="SM00015">
    <property type="entry name" value="IQ"/>
    <property type="match status" value="3"/>
</dbReference>
<dbReference type="SMART" id="SM00242">
    <property type="entry name" value="MYSc"/>
    <property type="match status" value="1"/>
</dbReference>
<dbReference type="SMART" id="SM00220">
    <property type="entry name" value="S_TKc"/>
    <property type="match status" value="1"/>
</dbReference>
<dbReference type="SUPFAM" id="SSF52540">
    <property type="entry name" value="P-loop containing nucleoside triphosphate hydrolases"/>
    <property type="match status" value="1"/>
</dbReference>
<dbReference type="SUPFAM" id="SSF56112">
    <property type="entry name" value="Protein kinase-like (PK-like)"/>
    <property type="match status" value="1"/>
</dbReference>
<dbReference type="PROSITE" id="PS50096">
    <property type="entry name" value="IQ"/>
    <property type="match status" value="3"/>
</dbReference>
<dbReference type="PROSITE" id="PS51456">
    <property type="entry name" value="MYOSIN_MOTOR"/>
    <property type="match status" value="1"/>
</dbReference>
<dbReference type="PROSITE" id="PS00107">
    <property type="entry name" value="PROTEIN_KINASE_ATP"/>
    <property type="match status" value="1"/>
</dbReference>
<dbReference type="PROSITE" id="PS50011">
    <property type="entry name" value="PROTEIN_KINASE_DOM"/>
    <property type="match status" value="1"/>
</dbReference>
<comment type="function">
    <text evidence="1 7 10 12">Actin-dependent motor protein with a protein kinase activity, playing an essential role in hearing (PubMed:12032315, PubMed:29880844, PubMed:34788109). Probably also plays a role in vision. Required for normal cochlear hair bundle development and hearing. Plays an important role in the early steps of cochlear hair bundle morphogenesis. Influences the number and lengths of stereocilia to be produced and limits the growth of microvilli within the forming auditory hair bundles thereby contributing to the architecture of the hair bundle, including its staircase pattern. Involved in the elongation of actin in stereocilia tips by transporting the actin regulatory factor ESPN to the plus ends of actin filaments (PubMed:29880844, PubMed:34788109).</text>
</comment>
<comment type="catalytic activity">
    <reaction>
        <text>L-seryl-[protein] + ATP = O-phospho-L-seryl-[protein] + ADP + H(+)</text>
        <dbReference type="Rhea" id="RHEA:17989"/>
        <dbReference type="Rhea" id="RHEA-COMP:9863"/>
        <dbReference type="Rhea" id="RHEA-COMP:11604"/>
        <dbReference type="ChEBI" id="CHEBI:15378"/>
        <dbReference type="ChEBI" id="CHEBI:29999"/>
        <dbReference type="ChEBI" id="CHEBI:30616"/>
        <dbReference type="ChEBI" id="CHEBI:83421"/>
        <dbReference type="ChEBI" id="CHEBI:456216"/>
        <dbReference type="EC" id="2.7.11.1"/>
    </reaction>
</comment>
<comment type="catalytic activity">
    <reaction>
        <text>L-threonyl-[protein] + ATP = O-phospho-L-threonyl-[protein] + ADP + H(+)</text>
        <dbReference type="Rhea" id="RHEA:46608"/>
        <dbReference type="Rhea" id="RHEA-COMP:11060"/>
        <dbReference type="Rhea" id="RHEA-COMP:11605"/>
        <dbReference type="ChEBI" id="CHEBI:15378"/>
        <dbReference type="ChEBI" id="CHEBI:30013"/>
        <dbReference type="ChEBI" id="CHEBI:30616"/>
        <dbReference type="ChEBI" id="CHEBI:61977"/>
        <dbReference type="ChEBI" id="CHEBI:456216"/>
        <dbReference type="EC" id="2.7.11.1"/>
    </reaction>
</comment>
<comment type="catalytic activity">
    <reaction evidence="12">
        <text>ATP + H2O = ADP + phosphate + H(+)</text>
        <dbReference type="Rhea" id="RHEA:13065"/>
        <dbReference type="ChEBI" id="CHEBI:15377"/>
        <dbReference type="ChEBI" id="CHEBI:15378"/>
        <dbReference type="ChEBI" id="CHEBI:30616"/>
        <dbReference type="ChEBI" id="CHEBI:43474"/>
        <dbReference type="ChEBI" id="CHEBI:456216"/>
    </reaction>
</comment>
<comment type="subunit">
    <text evidence="1 9">Interacts with MORN4 (PubMed:25822849). Interacts (via C-terminus) with ESPN and ESPNL (By similarity).</text>
</comment>
<comment type="subcellular location">
    <subcellularLocation>
        <location>Cytoplasm</location>
        <location>Cytoskeleton</location>
    </subcellularLocation>
    <subcellularLocation>
        <location evidence="9">Cytoplasm</location>
    </subcellularLocation>
    <subcellularLocation>
        <location evidence="9 10">Cell projection</location>
        <location evidence="9 10">Filopodium tip</location>
    </subcellularLocation>
    <subcellularLocation>
        <location evidence="10">Cell projection</location>
        <location evidence="10">Stereocilium</location>
    </subcellularLocation>
    <text evidence="9">Increased localization at the filodium tip seen in the presence of MORN4.</text>
</comment>
<comment type="alternative products">
    <event type="alternative splicing"/>
    <isoform>
        <id>Q8NEV4-1</id>
        <name>1</name>
        <sequence type="displayed"/>
    </isoform>
    <isoform>
        <id>Q8NEV4-2</id>
        <name>2</name>
        <sequence type="described" ref="VSP_056231 VSP_056232"/>
    </isoform>
</comment>
<comment type="tissue specificity">
    <text>Strongest expression in retina, retinal pigment epithelial cells, cochlea and pancreas.</text>
</comment>
<comment type="disease" evidence="7">
    <disease id="DI-00870">
        <name>Deafness, autosomal recessive, 30</name>
        <acronym>DFNB30</acronym>
        <description>A form of non-syndromic deafness characterized by bilateral progressive hearing loss, which first affects the high frequencies. Hearing loss begins in the second decade, and by age 50 is severe in high and middle frequencies and moderate at low frequencies.</description>
        <dbReference type="MIM" id="607101"/>
    </disease>
    <text>The disease is caused by variants affecting the gene represented in this entry.</text>
</comment>
<comment type="disease" evidence="10 11 12">
    <disease id="DI-06850">
        <name>Deafness, autosomal dominant, 90</name>
        <acronym>DFNA90</acronym>
        <description>A form of non-syndromic, sensorineural hearing loss. Sensorineural hearing loss results from damage to the neural receptors of the inner ear, the nerve pathways to the brain, or the area of the brain that receives sound information. DFNA90 is characterized by bilateral progressive hearing loss that affects all frequencies.</description>
        <dbReference type="MIM" id="620722"/>
    </disease>
    <text>The disease is caused by variants affecting the gene represented in this entry.</text>
</comment>
<comment type="similarity">
    <text evidence="14">In the C-terminal section; belongs to the TRAFAC class myosin-kinesin ATPase superfamily. Myosin family.</text>
</comment>
<comment type="similarity">
    <text evidence="14">In the N-terminal section; belongs to the protein kinase superfamily. STE Ser/Thr protein kinase family.</text>
</comment>
<protein>
    <recommendedName>
        <fullName>Myosin-IIIa</fullName>
        <ecNumber>2.7.11.1</ecNumber>
    </recommendedName>
</protein>
<proteinExistence type="evidence at protein level"/>
<name>MYO3A_HUMAN</name>
<feature type="chain" id="PRO_0000086413" description="Myosin-IIIa">
    <location>
        <begin position="1"/>
        <end position="1616"/>
    </location>
</feature>
<feature type="domain" description="Protein kinase" evidence="3">
    <location>
        <begin position="21"/>
        <end position="287"/>
    </location>
</feature>
<feature type="domain" description="Myosin motor" evidence="4">
    <location>
        <begin position="338"/>
        <end position="1053"/>
    </location>
</feature>
<feature type="domain" description="IQ 1" evidence="2">
    <location>
        <begin position="1055"/>
        <end position="1084"/>
    </location>
</feature>
<feature type="domain" description="IQ 2" evidence="2">
    <location>
        <begin position="1082"/>
        <end position="1111"/>
    </location>
</feature>
<feature type="domain" description="IQ 3" evidence="2">
    <location>
        <begin position="1346"/>
        <end position="1375"/>
    </location>
</feature>
<feature type="region of interest" description="Actin-binding" evidence="4">
    <location>
        <begin position="934"/>
        <end position="956"/>
    </location>
</feature>
<feature type="region of interest" description="Interaction with MORN4" evidence="9">
    <location>
        <begin position="1401"/>
        <end position="1479"/>
    </location>
</feature>
<feature type="region of interest" description="Disordered" evidence="5">
    <location>
        <begin position="1545"/>
        <end position="1567"/>
    </location>
</feature>
<feature type="region of interest" description="Disordered" evidence="5">
    <location>
        <begin position="1581"/>
        <end position="1616"/>
    </location>
</feature>
<feature type="compositionally biased region" description="Basic and acidic residues" evidence="5">
    <location>
        <begin position="1550"/>
        <end position="1564"/>
    </location>
</feature>
<feature type="compositionally biased region" description="Basic and acidic residues" evidence="5">
    <location>
        <begin position="1583"/>
        <end position="1592"/>
    </location>
</feature>
<feature type="compositionally biased region" description="Basic residues" evidence="5">
    <location>
        <begin position="1602"/>
        <end position="1616"/>
    </location>
</feature>
<feature type="active site" description="Proton acceptor" evidence="3">
    <location>
        <position position="150"/>
    </location>
</feature>
<feature type="binding site" evidence="3">
    <location>
        <begin position="27"/>
        <end position="35"/>
    </location>
    <ligand>
        <name>ATP</name>
        <dbReference type="ChEBI" id="CHEBI:30616"/>
    </ligand>
</feature>
<feature type="binding site" evidence="3">
    <location>
        <position position="50"/>
    </location>
    <ligand>
        <name>ATP</name>
        <dbReference type="ChEBI" id="CHEBI:30616"/>
    </ligand>
</feature>
<feature type="splice variant" id="VSP_056231" description="In isoform 2." evidence="13">
    <original>NPP</original>
    <variation>SDD</variation>
    <location>
        <begin position="245"/>
        <end position="247"/>
    </location>
</feature>
<feature type="splice variant" id="VSP_056232" description="In isoform 2." evidence="13">
    <location>
        <begin position="248"/>
        <end position="1616"/>
    </location>
</feature>
<feature type="sequence variant" id="VAR_040871" description="In dbSNP:rs33968748." evidence="8">
    <original>T</original>
    <variation>I</variation>
    <location>
        <position position="178"/>
    </location>
</feature>
<feature type="sequence variant" id="VAR_021866" description="In dbSNP:rs3737274.">
    <original>D</original>
    <variation>N</variation>
    <location>
        <position position="204"/>
    </location>
</feature>
<feature type="sequence variant" id="VAR_089369" description="In DFNA90; likely pathogenic." evidence="11">
    <original>L</original>
    <variation>P</variation>
    <location>
        <position position="239"/>
    </location>
</feature>
<feature type="sequence variant" id="VAR_040872" description="In dbSNP:rs3824700." evidence="8">
    <original>R</original>
    <variation>H</variation>
    <location>
        <position position="319"/>
    </location>
</feature>
<feature type="sequence variant" id="VAR_040873" description="In dbSNP:rs3824699." evidence="8">
    <original>I</original>
    <variation>V</variation>
    <location>
        <position position="348"/>
    </location>
</feature>
<feature type="sequence variant" id="VAR_040874" description="In dbSNP:rs3817420." evidence="8">
    <original>V</original>
    <variation>I</variation>
    <location>
        <position position="369"/>
    </location>
</feature>
<feature type="sequence variant" id="VAR_040875" description="In an ovarian mucinous carcinoma sample; somatic mutation; dbSNP:rs1423134583." evidence="8">
    <original>N</original>
    <variation>K</variation>
    <location>
        <position position="525"/>
    </location>
</feature>
<feature type="sequence variant" id="VAR_089370" description="In DFNA90; pathogenic; decreased function in filopodium assembly resulting in lower elongation rate of actin protrusions; decreased ATPase and microfilament motor activity; no effect on ATP binding; the mutant has a dominant negative effect on subcellular localzation by displacing wild-type protein from the tips of stereocilia; dbSNP:rs1564573788." evidence="10 12">
    <original>L</original>
    <variation>W</variation>
    <location>
        <position position="697"/>
    </location>
</feature>
<feature type="sequence variant" id="VAR_040876" description="In dbSNP:rs33947968." evidence="8">
    <original>A</original>
    <variation>S</variation>
    <location>
        <position position="833"/>
    </location>
</feature>
<feature type="sequence variant" id="VAR_021867" description="In dbSNP:rs3758449." evidence="8">
    <original>S</original>
    <variation>N</variation>
    <location>
        <position position="956"/>
    </location>
</feature>
<feature type="sequence variant" id="VAR_040877" description="In an ovarian serous carcinoma sample; somatic mutation." evidence="8">
    <original>S</original>
    <variation>R</variation>
    <location>
        <position position="956"/>
    </location>
</feature>
<feature type="sequence variant" id="VAR_040878" description="In dbSNP:rs34918608." evidence="8">
    <original>A</original>
    <variation>T</variation>
    <location>
        <position position="1032"/>
    </location>
</feature>
<feature type="sequence variant" id="VAR_040879" description="In dbSNP:rs35447806." evidence="8">
    <original>V</original>
    <variation>M</variation>
    <location>
        <position position="1045"/>
    </location>
</feature>
<feature type="sequence variant" id="VAR_040880" description="In dbSNP:rs35449183." evidence="8">
    <original>V</original>
    <variation>M</variation>
    <location>
        <position position="1137"/>
    </location>
</feature>
<feature type="sequence variant" id="VAR_040881" description="In dbSNP:rs35675577." evidence="8">
    <original>V</original>
    <variation>A</variation>
    <location>
        <position position="1195"/>
    </location>
</feature>
<feature type="sequence variant" id="VAR_033905" description="In dbSNP:rs3740231." evidence="8">
    <original>T</original>
    <variation>S</variation>
    <location>
        <position position="1284"/>
    </location>
</feature>
<feature type="sequence variant" id="VAR_040882" description="In dbSNP:rs35575696." evidence="8">
    <original>P</original>
    <variation>T</variation>
    <location>
        <position position="1287"/>
    </location>
</feature>
<feature type="sequence variant" id="VAR_022779" description="In dbSNP:rs1999240." evidence="6 7 8">
    <original>R</original>
    <variation>S</variation>
    <location>
        <position position="1313"/>
    </location>
</feature>
<feature type="sequence variant" id="VAR_040883" description="In a renal clear cell carcinoma sample; somatic mutation." evidence="8">
    <original>D</original>
    <variation>H</variation>
    <location>
        <position position="1347"/>
    </location>
</feature>
<feature type="sequence variant" id="VAR_040884" description="In dbSNP:rs34151474." evidence="8">
    <original>T</original>
    <variation>I</variation>
    <location>
        <position position="1417"/>
    </location>
</feature>
<feature type="sequence variant" id="VAR_040885" description="In dbSNP:rs34204285." evidence="8">
    <original>K</original>
    <variation>E</variation>
    <location>
        <position position="1488"/>
    </location>
</feature>
<feature type="sequence conflict" description="In Ref. 1; AAF70861 and 2; AAM34500." evidence="14" ref="1 2">
    <original>M</original>
    <variation>I</variation>
    <location>
        <position position="418"/>
    </location>
</feature>
<feature type="sequence conflict" description="In Ref. 1; AAF70861 and 2; AAM34500." evidence="14" ref="1 2">
    <original>A</original>
    <variation>V</variation>
    <location>
        <position position="636"/>
    </location>
</feature>
<feature type="sequence conflict" description="In Ref. 2; AAM34500." evidence="14" ref="2">
    <original>RDTL</original>
    <variation>KTLV</variation>
    <location>
        <begin position="848"/>
        <end position="851"/>
    </location>
</feature>
<feature type="sequence conflict" description="In Ref. 2; AAM34500." evidence="14" ref="2">
    <original>TKNVI</original>
    <variation>LKML</variation>
    <location>
        <begin position="886"/>
        <end position="890"/>
    </location>
</feature>
<feature type="sequence conflict" description="In Ref. 1; AAF70861 and 2; AAM34500." evidence="14" ref="1 2">
    <original>R</original>
    <variation>G</variation>
    <location>
        <position position="1099"/>
    </location>
</feature>
<feature type="sequence conflict" description="In Ref. 1; AAF70861 and 2; AAM34500." evidence="14" ref="1 2">
    <original>S</original>
    <variation>F</variation>
    <location>
        <position position="1217"/>
    </location>
</feature>
<feature type="sequence conflict" description="In Ref. 1; AAF70861 and 2; AAM34500." evidence="14" ref="1 2">
    <original>R</original>
    <variation>K</variation>
    <location>
        <position position="1378"/>
    </location>
</feature>
<feature type="helix" evidence="15">
    <location>
        <begin position="1414"/>
        <end position="1445"/>
    </location>
</feature>
<feature type="helix" evidence="15">
    <location>
        <begin position="1452"/>
        <end position="1454"/>
    </location>
</feature>
<sequence length="1616" mass="186208">MFPLIGKTIIFDNFPDPSDTWEITETIGKGTYGKVFKVLNKKNGQKAAVKILDPIHDIDEEIEAEYNILKALSDHPNVVRFYGIYFKKDKVNGDKLWLVLELCSGGSVTDLVKGFLKRGERMSEPLIAYILHEALMGLQHLHNNKTIHRDVKGNNILLTTEGGVKLVDFGVSAQLTSTRHRRNTSVGTPFWMAPEVIACEQQLDTTYDARCDTWSLGITAIELGDGDPPLADLHPMRALFKIPRNPPPKLRQPELWSAEFNDFISKCLTKDYEKRPTVSELLQHKFITQIEGKDVMLQKQLTEFIGIHQCMGGTEKARRERIHTKKGNFNRPLISNLKDVDDLATLEILDENTVSEQLEKCYSRDQIYVYVGDILIALNPFQSLGLYSTKHSKLYIGSKRTASPPHIFAMADLGYQSMITYNSDQCIVISGESGAGKTENAHLLVQQLTVLGKANNRTLQEKILQVNNLVEAFGNACTIINDNSSRFGKYLEMKFTSSGAVVGAQISEYLLEKSRVIHQAIGEKNFHIFYYIYAGLAEKKKLAHYKLPENKPPRYLQNDHLRTVQDIMNNSFYKSQYELIEQCFKVIGFTMEQLGSIYSILAAILNVGNIEFSSVATEHQIDKSHISNHTALENCASLLCIRADELQEALTSHCVVTRGETIIRPNTVEKATDVRDAMAKTLYGRLFSWIVNCINSLLKHDSSPSGNGDELSIGILDIFGFENFKKNSFEQLCINIANEQIQYYYNQHVFAWEQNEYLNEDVDARVIEYEDNWPLLDMFLQKPMGLLSLLDEESRFPKATDQTLVEKFEGNLKSQYFWRPKRMELSFGIHHYAGKVLYNASGFLAKNRDTLPTDIVLLLRSSDNSVIRQLVNHPLTKTGNLPHSKTKNVINYQMRTSEKLINLAKGDTGEATRHARETTNMKTQTVASYFRYSLMDLLSKMVVGQPHFVRCIKPNSERQARKYDKEKVLLQLRYTGILETARIRRLGFSHRILFANFIKRYYLLCYKSSEEPRMSPDTCATILEKAGLDNWALGKTKVFLKYYHVEQLNLMRKEAIDKLILIQACVRAFLCSRRYQKIQEKRKESAIIIQSAARGHLVRKQRKEIVDMKNTAVTTIQTSDQEFDYKKNFENTRESFVKKQAENAISANERFISAPNNKGSVSVVKTSTFKPEEETTNAVESNNRVYQTPKKMNNVYEEEVKQEFYLVGPEVSPKQKSVKDLEENSNLRKVEKEEAMIQSYYQRYTEERNCEESKAAYLERKAISERPSYPVPWLAENETSFKKTLEPTLSQRSIYQNANSMEKEKKTSVVTQRAPICSQEEGRGRLRHETVKERQVEPVTQAQEEEDKAAVFIQSKYRGYKRRQQLRKDKMSSFKHQRIVTTPTEVARNTHNLYSYPTKHEEINNIKKKDNKDSKATSEREACGLAIFSKQISKLSEEYFILQKKLNEMILSQQLKSLYLGVSHHKPINRRVSSQQCLSGVCKGEEPKILRPPRRPRKPKTLNNPEDSTYYYLLHKSIQEEKRRPRKDSQGKLLDLEDFYYKEFLPSRSGPKEHSPSLRERRPQQELQNQCIKANERCWAAESPEKEEEREPAANPYDFRRLLRKTSQRRRLVQQS</sequence>
<keyword id="KW-0002">3D-structure</keyword>
<keyword id="KW-0009">Actin-binding</keyword>
<keyword id="KW-0025">Alternative splicing</keyword>
<keyword id="KW-0067">ATP-binding</keyword>
<keyword id="KW-0966">Cell projection</keyword>
<keyword id="KW-0963">Cytoplasm</keyword>
<keyword id="KW-0206">Cytoskeleton</keyword>
<keyword id="KW-0209">Deafness</keyword>
<keyword id="KW-0225">Disease variant</keyword>
<keyword id="KW-1009">Hearing</keyword>
<keyword id="KW-0418">Kinase</keyword>
<keyword id="KW-0505">Motor protein</keyword>
<keyword id="KW-0518">Myosin</keyword>
<keyword id="KW-1010">Non-syndromic deafness</keyword>
<keyword id="KW-0547">Nucleotide-binding</keyword>
<keyword id="KW-1267">Proteomics identification</keyword>
<keyword id="KW-1185">Reference proteome</keyword>
<keyword id="KW-0677">Repeat</keyword>
<keyword id="KW-0716">Sensory transduction</keyword>
<keyword id="KW-0723">Serine/threonine-protein kinase</keyword>
<keyword id="KW-0808">Transferase</keyword>
<keyword id="KW-0844">Vision</keyword>
<evidence type="ECO:0000250" key="1">
    <source>
        <dbReference type="UniProtKB" id="Q8K3H5"/>
    </source>
</evidence>
<evidence type="ECO:0000255" key="2">
    <source>
        <dbReference type="PROSITE-ProRule" id="PRU00116"/>
    </source>
</evidence>
<evidence type="ECO:0000255" key="3">
    <source>
        <dbReference type="PROSITE-ProRule" id="PRU00159"/>
    </source>
</evidence>
<evidence type="ECO:0000255" key="4">
    <source>
        <dbReference type="PROSITE-ProRule" id="PRU00782"/>
    </source>
</evidence>
<evidence type="ECO:0000256" key="5">
    <source>
        <dbReference type="SAM" id="MobiDB-lite"/>
    </source>
</evidence>
<evidence type="ECO:0000269" key="6">
    <source>
    </source>
</evidence>
<evidence type="ECO:0000269" key="7">
    <source>
    </source>
</evidence>
<evidence type="ECO:0000269" key="8">
    <source>
    </source>
</evidence>
<evidence type="ECO:0000269" key="9">
    <source>
    </source>
</evidence>
<evidence type="ECO:0000269" key="10">
    <source>
    </source>
</evidence>
<evidence type="ECO:0000269" key="11">
    <source>
    </source>
</evidence>
<evidence type="ECO:0000269" key="12">
    <source>
    </source>
</evidence>
<evidence type="ECO:0000303" key="13">
    <source>
    </source>
</evidence>
<evidence type="ECO:0000305" key="14"/>
<evidence type="ECO:0007829" key="15">
    <source>
        <dbReference type="PDB" id="6JLE"/>
    </source>
</evidence>